<proteinExistence type="inferred from homology"/>
<dbReference type="EC" id="1.13.11.6" evidence="1"/>
<dbReference type="EMBL" id="CM002236">
    <property type="protein sequence ID" value="EAA34972.1"/>
    <property type="molecule type" value="Genomic_DNA"/>
</dbReference>
<dbReference type="RefSeq" id="XP_964208.1">
    <property type="nucleotide sequence ID" value="XM_959115.3"/>
</dbReference>
<dbReference type="SMR" id="Q7SDX3"/>
<dbReference type="FunCoup" id="Q7SDX3">
    <property type="interactions" value="140"/>
</dbReference>
<dbReference type="STRING" id="367110.Q7SDX3"/>
<dbReference type="PaxDb" id="5141-EFNCRP00000002760"/>
<dbReference type="EnsemblFungi" id="EAA34972">
    <property type="protein sequence ID" value="EAA34972"/>
    <property type="gene ID" value="NCU03282"/>
</dbReference>
<dbReference type="GeneID" id="3880357"/>
<dbReference type="KEGG" id="ncr:NCU03282"/>
<dbReference type="VEuPathDB" id="FungiDB:NCU03282"/>
<dbReference type="HOGENOM" id="CLU_095765_0_0_1"/>
<dbReference type="InParanoid" id="Q7SDX3"/>
<dbReference type="OMA" id="KPPVGNQ"/>
<dbReference type="OrthoDB" id="204928at2759"/>
<dbReference type="UniPathway" id="UPA00253">
    <property type="reaction ID" value="UER00330"/>
</dbReference>
<dbReference type="Proteomes" id="UP000001805">
    <property type="component" value="Chromosome 1, Linkage Group I"/>
</dbReference>
<dbReference type="GO" id="GO:0005737">
    <property type="term" value="C:cytoplasm"/>
    <property type="evidence" value="ECO:0000318"/>
    <property type="project" value="GO_Central"/>
</dbReference>
<dbReference type="GO" id="GO:0000334">
    <property type="term" value="F:3-hydroxyanthranilate 3,4-dioxygenase activity"/>
    <property type="evidence" value="ECO:0000318"/>
    <property type="project" value="GO_Central"/>
</dbReference>
<dbReference type="GO" id="GO:0008198">
    <property type="term" value="F:ferrous iron binding"/>
    <property type="evidence" value="ECO:0007669"/>
    <property type="project" value="UniProtKB-UniRule"/>
</dbReference>
<dbReference type="GO" id="GO:0034354">
    <property type="term" value="P:'de novo' NAD biosynthetic process from L-tryptophan"/>
    <property type="evidence" value="ECO:0000318"/>
    <property type="project" value="GO_Central"/>
</dbReference>
<dbReference type="GO" id="GO:0043420">
    <property type="term" value="P:anthranilate metabolic process"/>
    <property type="evidence" value="ECO:0007669"/>
    <property type="project" value="UniProtKB-UniRule"/>
</dbReference>
<dbReference type="GO" id="GO:0006569">
    <property type="term" value="P:L-tryptophan catabolic process"/>
    <property type="evidence" value="ECO:0007669"/>
    <property type="project" value="UniProtKB-UniRule"/>
</dbReference>
<dbReference type="GO" id="GO:0019805">
    <property type="term" value="P:quinolinate biosynthetic process"/>
    <property type="evidence" value="ECO:0007669"/>
    <property type="project" value="UniProtKB-UniRule"/>
</dbReference>
<dbReference type="GO" id="GO:0046874">
    <property type="term" value="P:quinolinate metabolic process"/>
    <property type="evidence" value="ECO:0000318"/>
    <property type="project" value="GO_Central"/>
</dbReference>
<dbReference type="CDD" id="cd06123">
    <property type="entry name" value="cupin_HAO"/>
    <property type="match status" value="1"/>
</dbReference>
<dbReference type="FunFam" id="2.60.120.10:FF:000093">
    <property type="entry name" value="3-hydroxyanthranilate 3,4-dioxygenase"/>
    <property type="match status" value="1"/>
</dbReference>
<dbReference type="Gene3D" id="2.60.120.10">
    <property type="entry name" value="Jelly Rolls"/>
    <property type="match status" value="1"/>
</dbReference>
<dbReference type="HAMAP" id="MF_00825">
    <property type="entry name" value="3_HAO"/>
    <property type="match status" value="1"/>
</dbReference>
<dbReference type="InterPro" id="IPR010329">
    <property type="entry name" value="3hydroanth_dOase"/>
</dbReference>
<dbReference type="InterPro" id="IPR014710">
    <property type="entry name" value="RmlC-like_jellyroll"/>
</dbReference>
<dbReference type="InterPro" id="IPR011051">
    <property type="entry name" value="RmlC_Cupin_sf"/>
</dbReference>
<dbReference type="NCBIfam" id="TIGR03037">
    <property type="entry name" value="anthran_nbaC"/>
    <property type="match status" value="1"/>
</dbReference>
<dbReference type="PANTHER" id="PTHR15497">
    <property type="entry name" value="3-HYDROXYANTHRANILATE 3,4-DIOXYGENASE"/>
    <property type="match status" value="1"/>
</dbReference>
<dbReference type="PANTHER" id="PTHR15497:SF1">
    <property type="entry name" value="3-HYDROXYANTHRANILATE 3,4-DIOXYGENASE"/>
    <property type="match status" value="1"/>
</dbReference>
<dbReference type="Pfam" id="PF06052">
    <property type="entry name" value="3-HAO"/>
    <property type="match status" value="1"/>
</dbReference>
<dbReference type="SUPFAM" id="SSF51182">
    <property type="entry name" value="RmlC-like cupins"/>
    <property type="match status" value="1"/>
</dbReference>
<accession>Q7SDX3</accession>
<name>3HAO_NEUCR</name>
<evidence type="ECO:0000255" key="1">
    <source>
        <dbReference type="HAMAP-Rule" id="MF_03019"/>
    </source>
</evidence>
<reference key="1">
    <citation type="journal article" date="2003" name="Nature">
        <title>The genome sequence of the filamentous fungus Neurospora crassa.</title>
        <authorList>
            <person name="Galagan J.E."/>
            <person name="Calvo S.E."/>
            <person name="Borkovich K.A."/>
            <person name="Selker E.U."/>
            <person name="Read N.D."/>
            <person name="Jaffe D.B."/>
            <person name="FitzHugh W."/>
            <person name="Ma L.-J."/>
            <person name="Smirnov S."/>
            <person name="Purcell S."/>
            <person name="Rehman B."/>
            <person name="Elkins T."/>
            <person name="Engels R."/>
            <person name="Wang S."/>
            <person name="Nielsen C.B."/>
            <person name="Butler J."/>
            <person name="Endrizzi M."/>
            <person name="Qui D."/>
            <person name="Ianakiev P."/>
            <person name="Bell-Pedersen D."/>
            <person name="Nelson M.A."/>
            <person name="Werner-Washburne M."/>
            <person name="Selitrennikoff C.P."/>
            <person name="Kinsey J.A."/>
            <person name="Braun E.L."/>
            <person name="Zelter A."/>
            <person name="Schulte U."/>
            <person name="Kothe G.O."/>
            <person name="Jedd G."/>
            <person name="Mewes H.-W."/>
            <person name="Staben C."/>
            <person name="Marcotte E."/>
            <person name="Greenberg D."/>
            <person name="Roy A."/>
            <person name="Foley K."/>
            <person name="Naylor J."/>
            <person name="Stange-Thomann N."/>
            <person name="Barrett R."/>
            <person name="Gnerre S."/>
            <person name="Kamal M."/>
            <person name="Kamvysselis M."/>
            <person name="Mauceli E.W."/>
            <person name="Bielke C."/>
            <person name="Rudd S."/>
            <person name="Frishman D."/>
            <person name="Krystofova S."/>
            <person name="Rasmussen C."/>
            <person name="Metzenberg R.L."/>
            <person name="Perkins D.D."/>
            <person name="Kroken S."/>
            <person name="Cogoni C."/>
            <person name="Macino G."/>
            <person name="Catcheside D.E.A."/>
            <person name="Li W."/>
            <person name="Pratt R.J."/>
            <person name="Osmani S.A."/>
            <person name="DeSouza C.P.C."/>
            <person name="Glass N.L."/>
            <person name="Orbach M.J."/>
            <person name="Berglund J.A."/>
            <person name="Voelker R."/>
            <person name="Yarden O."/>
            <person name="Plamann M."/>
            <person name="Seiler S."/>
            <person name="Dunlap J.C."/>
            <person name="Radford A."/>
            <person name="Aramayo R."/>
            <person name="Natvig D.O."/>
            <person name="Alex L.A."/>
            <person name="Mannhaupt G."/>
            <person name="Ebbole D.J."/>
            <person name="Freitag M."/>
            <person name="Paulsen I."/>
            <person name="Sachs M.S."/>
            <person name="Lander E.S."/>
            <person name="Nusbaum C."/>
            <person name="Birren B.W."/>
        </authorList>
    </citation>
    <scope>NUCLEOTIDE SEQUENCE [LARGE SCALE GENOMIC DNA]</scope>
    <source>
        <strain>ATCC 24698 / 74-OR23-1A / CBS 708.71 / DSM 1257 / FGSC 987</strain>
    </source>
</reference>
<feature type="chain" id="PRO_0000361991" description="3-hydroxyanthranilate 3,4-dioxygenase">
    <location>
        <begin position="1"/>
        <end position="180"/>
    </location>
</feature>
<feature type="binding site" evidence="1">
    <location>
        <position position="44"/>
    </location>
    <ligand>
        <name>O2</name>
        <dbReference type="ChEBI" id="CHEBI:15379"/>
    </ligand>
</feature>
<feature type="binding site" evidence="1">
    <location>
        <position position="48"/>
    </location>
    <ligand>
        <name>Fe cation</name>
        <dbReference type="ChEBI" id="CHEBI:24875"/>
        <note>catalytic</note>
    </ligand>
</feature>
<feature type="binding site" evidence="1">
    <location>
        <position position="54"/>
    </location>
    <ligand>
        <name>Fe cation</name>
        <dbReference type="ChEBI" id="CHEBI:24875"/>
        <note>catalytic</note>
    </ligand>
</feature>
<feature type="binding site" evidence="1">
    <location>
        <position position="54"/>
    </location>
    <ligand>
        <name>substrate</name>
    </ligand>
</feature>
<feature type="binding site" evidence="1">
    <location>
        <position position="92"/>
    </location>
    <ligand>
        <name>Fe cation</name>
        <dbReference type="ChEBI" id="CHEBI:24875"/>
        <note>catalytic</note>
    </ligand>
</feature>
<feature type="binding site" evidence="1">
    <location>
        <position position="96"/>
    </location>
    <ligand>
        <name>substrate</name>
    </ligand>
</feature>
<feature type="binding site" evidence="1">
    <location>
        <position position="106"/>
    </location>
    <ligand>
        <name>substrate</name>
    </ligand>
</feature>
<feature type="binding site" evidence="1">
    <location>
        <position position="121"/>
    </location>
    <ligand>
        <name>a divalent metal cation</name>
        <dbReference type="ChEBI" id="CHEBI:60240"/>
    </ligand>
</feature>
<feature type="binding site" evidence="1">
    <location>
        <position position="124"/>
    </location>
    <ligand>
        <name>a divalent metal cation</name>
        <dbReference type="ChEBI" id="CHEBI:60240"/>
    </ligand>
</feature>
<feature type="binding site" evidence="1">
    <location>
        <position position="158"/>
    </location>
    <ligand>
        <name>a divalent metal cation</name>
        <dbReference type="ChEBI" id="CHEBI:60240"/>
    </ligand>
</feature>
<feature type="binding site" evidence="1">
    <location>
        <position position="161"/>
    </location>
    <ligand>
        <name>a divalent metal cation</name>
        <dbReference type="ChEBI" id="CHEBI:60240"/>
    </ligand>
</feature>
<sequence length="180" mass="20557">MLSSPVNLPKWLEENSHLLKPPINNYCVYNDDFTVMIVGGPNARTDYHINQTPEWFYQYKGAMMLKVVDDGNFRDIIIREGEMFLLPGNTPHNPVRFADTVGIVLEQKRPADTIDRMRWYCQNCKEIVHEASFHCTDLGTQIKAAVEAFKGNEQLRTCKKCGVLADWSPKPGSIQDPNVQ</sequence>
<organism>
    <name type="scientific">Neurospora crassa (strain ATCC 24698 / 74-OR23-1A / CBS 708.71 / DSM 1257 / FGSC 987)</name>
    <dbReference type="NCBI Taxonomy" id="367110"/>
    <lineage>
        <taxon>Eukaryota</taxon>
        <taxon>Fungi</taxon>
        <taxon>Dikarya</taxon>
        <taxon>Ascomycota</taxon>
        <taxon>Pezizomycotina</taxon>
        <taxon>Sordariomycetes</taxon>
        <taxon>Sordariomycetidae</taxon>
        <taxon>Sordariales</taxon>
        <taxon>Sordariaceae</taxon>
        <taxon>Neurospora</taxon>
    </lineage>
</organism>
<keyword id="KW-0963">Cytoplasm</keyword>
<keyword id="KW-0223">Dioxygenase</keyword>
<keyword id="KW-0408">Iron</keyword>
<keyword id="KW-0479">Metal-binding</keyword>
<keyword id="KW-0560">Oxidoreductase</keyword>
<keyword id="KW-0662">Pyridine nucleotide biosynthesis</keyword>
<keyword id="KW-1185">Reference proteome</keyword>
<gene>
    <name type="primary">bna1</name>
    <name type="ORF">NCU03282</name>
</gene>
<protein>
    <recommendedName>
        <fullName evidence="1">3-hydroxyanthranilate 3,4-dioxygenase</fullName>
        <ecNumber evidence="1">1.13.11.6</ecNumber>
    </recommendedName>
    <alternativeName>
        <fullName evidence="1">3-hydroxyanthranilate oxygenase</fullName>
        <shortName evidence="1">3-HAO</shortName>
    </alternativeName>
    <alternativeName>
        <fullName evidence="1">3-hydroxyanthranilic acid dioxygenase</fullName>
        <shortName evidence="1">HAD</shortName>
    </alternativeName>
    <alternativeName>
        <fullName evidence="1">Biosynthesis of nicotinic acid protein 1</fullName>
    </alternativeName>
</protein>
<comment type="function">
    <text evidence="1">Catalyzes the oxidative ring opening of 3-hydroxyanthranilate to 2-amino-3-carboxymuconate semialdehyde, which spontaneously cyclizes to quinolinate.</text>
</comment>
<comment type="catalytic activity">
    <reaction evidence="1">
        <text>3-hydroxyanthranilate + O2 = (2Z,4Z)-2-amino-3-carboxymuconate 6-semialdehyde</text>
        <dbReference type="Rhea" id="RHEA:17953"/>
        <dbReference type="ChEBI" id="CHEBI:15379"/>
        <dbReference type="ChEBI" id="CHEBI:36559"/>
        <dbReference type="ChEBI" id="CHEBI:77612"/>
        <dbReference type="EC" id="1.13.11.6"/>
    </reaction>
</comment>
<comment type="cofactor">
    <cofactor evidence="1">
        <name>Fe(2+)</name>
        <dbReference type="ChEBI" id="CHEBI:29033"/>
    </cofactor>
</comment>
<comment type="pathway">
    <text evidence="1">Cofactor biosynthesis; NAD(+) biosynthesis; quinolinate from L-kynurenine: step 3/3.</text>
</comment>
<comment type="subcellular location">
    <subcellularLocation>
        <location evidence="1">Cytoplasm</location>
    </subcellularLocation>
</comment>
<comment type="similarity">
    <text evidence="1">Belongs to the 3-HAO family.</text>
</comment>